<dbReference type="EMBL" id="AC011623">
    <property type="protein sequence ID" value="AAF08573.1"/>
    <property type="molecule type" value="Genomic_DNA"/>
</dbReference>
<dbReference type="EMBL" id="CP002686">
    <property type="protein sequence ID" value="AEE74391.1"/>
    <property type="molecule type" value="Genomic_DNA"/>
</dbReference>
<dbReference type="EMBL" id="AY099616">
    <property type="protein sequence ID" value="AAM20467.1"/>
    <property type="molecule type" value="mRNA"/>
</dbReference>
<dbReference type="EMBL" id="BT006618">
    <property type="protein sequence ID" value="AAP31962.1"/>
    <property type="molecule type" value="mRNA"/>
</dbReference>
<dbReference type="RefSeq" id="NP_187294.1">
    <property type="nucleotide sequence ID" value="NM_111518.5"/>
</dbReference>
<dbReference type="SMR" id="Q9SQU6"/>
<dbReference type="BioGRID" id="5152">
    <property type="interactions" value="27"/>
</dbReference>
<dbReference type="FunCoup" id="Q9SQU6">
    <property type="interactions" value="1788"/>
</dbReference>
<dbReference type="IntAct" id="Q9SQU6">
    <property type="interactions" value="27"/>
</dbReference>
<dbReference type="STRING" id="3702.Q9SQU6"/>
<dbReference type="iPTMnet" id="Q9SQU6"/>
<dbReference type="PaxDb" id="3702-AT3G06430.1"/>
<dbReference type="ProteomicsDB" id="249090"/>
<dbReference type="EnsemblPlants" id="AT3G06430.1">
    <property type="protein sequence ID" value="AT3G06430.1"/>
    <property type="gene ID" value="AT3G06430"/>
</dbReference>
<dbReference type="GeneID" id="819817"/>
<dbReference type="Gramene" id="AT3G06430.1">
    <property type="protein sequence ID" value="AT3G06430.1"/>
    <property type="gene ID" value="AT3G06430"/>
</dbReference>
<dbReference type="KEGG" id="ath:AT3G06430"/>
<dbReference type="Araport" id="AT3G06430"/>
<dbReference type="TAIR" id="AT3G06430">
    <property type="gene designation" value="PPR2"/>
</dbReference>
<dbReference type="eggNOG" id="KOG4197">
    <property type="taxonomic scope" value="Eukaryota"/>
</dbReference>
<dbReference type="HOGENOM" id="CLU_002706_49_6_1"/>
<dbReference type="InParanoid" id="Q9SQU6"/>
<dbReference type="OMA" id="AWANTVT"/>
<dbReference type="OrthoDB" id="185373at2759"/>
<dbReference type="PhylomeDB" id="Q9SQU6"/>
<dbReference type="PRO" id="PR:Q9SQU6"/>
<dbReference type="Proteomes" id="UP000006548">
    <property type="component" value="Chromosome 3"/>
</dbReference>
<dbReference type="ExpressionAtlas" id="Q9SQU6">
    <property type="expression patterns" value="baseline and differential"/>
</dbReference>
<dbReference type="GO" id="GO:0009507">
    <property type="term" value="C:chloroplast"/>
    <property type="evidence" value="ECO:0000314"/>
    <property type="project" value="TAIR"/>
</dbReference>
<dbReference type="GO" id="GO:0003729">
    <property type="term" value="F:mRNA binding"/>
    <property type="evidence" value="ECO:0000314"/>
    <property type="project" value="TAIR"/>
</dbReference>
<dbReference type="GO" id="GO:0019843">
    <property type="term" value="F:rRNA binding"/>
    <property type="evidence" value="ECO:0000314"/>
    <property type="project" value="TAIR"/>
</dbReference>
<dbReference type="GO" id="GO:0009793">
    <property type="term" value="P:embryo development ending in seed dormancy"/>
    <property type="evidence" value="ECO:0000315"/>
    <property type="project" value="TAIR"/>
</dbReference>
<dbReference type="GO" id="GO:0009553">
    <property type="term" value="P:embryo sac development"/>
    <property type="evidence" value="ECO:0000315"/>
    <property type="project" value="TAIR"/>
</dbReference>
<dbReference type="GO" id="GO:0009555">
    <property type="term" value="P:pollen development"/>
    <property type="evidence" value="ECO:0000315"/>
    <property type="project" value="TAIR"/>
</dbReference>
<dbReference type="GO" id="GO:0048868">
    <property type="term" value="P:pollen tube development"/>
    <property type="evidence" value="ECO:0000315"/>
    <property type="project" value="TAIR"/>
</dbReference>
<dbReference type="FunFam" id="1.25.40.10:FF:001936">
    <property type="entry name" value="EMB2750"/>
    <property type="match status" value="1"/>
</dbReference>
<dbReference type="FunFam" id="1.25.40.10:FF:001951">
    <property type="entry name" value="PPR2"/>
    <property type="match status" value="1"/>
</dbReference>
<dbReference type="Gene3D" id="1.25.40.10">
    <property type="entry name" value="Tetratricopeptide repeat domain"/>
    <property type="match status" value="3"/>
</dbReference>
<dbReference type="InterPro" id="IPR002885">
    <property type="entry name" value="Pentatricopeptide_rpt"/>
</dbReference>
<dbReference type="InterPro" id="IPR044179">
    <property type="entry name" value="PPR5-like"/>
</dbReference>
<dbReference type="InterPro" id="IPR011990">
    <property type="entry name" value="TPR-like_helical_dom_sf"/>
</dbReference>
<dbReference type="NCBIfam" id="TIGR00756">
    <property type="entry name" value="PPR"/>
    <property type="match status" value="7"/>
</dbReference>
<dbReference type="PANTHER" id="PTHR47874:SF7">
    <property type="entry name" value="BNAA05G30910D PROTEIN"/>
    <property type="match status" value="1"/>
</dbReference>
<dbReference type="PANTHER" id="PTHR47874">
    <property type="entry name" value="EXPRESSED PROTEIN"/>
    <property type="match status" value="1"/>
</dbReference>
<dbReference type="Pfam" id="PF01535">
    <property type="entry name" value="PPR"/>
    <property type="match status" value="2"/>
</dbReference>
<dbReference type="Pfam" id="PF13041">
    <property type="entry name" value="PPR_2"/>
    <property type="match status" value="4"/>
</dbReference>
<dbReference type="PROSITE" id="PS51375">
    <property type="entry name" value="PPR"/>
    <property type="match status" value="10"/>
</dbReference>
<protein>
    <recommendedName>
        <fullName>Pentatricopeptide repeat-containing protein At3g06430, chloroplastic</fullName>
    </recommendedName>
    <alternativeName>
        <fullName>Protein EMBRYO DEFECTIVE 2750</fullName>
    </alternativeName>
</protein>
<proteinExistence type="evidence at protein level"/>
<reference key="1">
    <citation type="journal article" date="2000" name="Nature">
        <title>Sequence and analysis of chromosome 3 of the plant Arabidopsis thaliana.</title>
        <authorList>
            <person name="Salanoubat M."/>
            <person name="Lemcke K."/>
            <person name="Rieger M."/>
            <person name="Ansorge W."/>
            <person name="Unseld M."/>
            <person name="Fartmann B."/>
            <person name="Valle G."/>
            <person name="Bloecker H."/>
            <person name="Perez-Alonso M."/>
            <person name="Obermaier B."/>
            <person name="Delseny M."/>
            <person name="Boutry M."/>
            <person name="Grivell L.A."/>
            <person name="Mache R."/>
            <person name="Puigdomenech P."/>
            <person name="De Simone V."/>
            <person name="Choisne N."/>
            <person name="Artiguenave F."/>
            <person name="Robert C."/>
            <person name="Brottier P."/>
            <person name="Wincker P."/>
            <person name="Cattolico L."/>
            <person name="Weissenbach J."/>
            <person name="Saurin W."/>
            <person name="Quetier F."/>
            <person name="Schaefer M."/>
            <person name="Mueller-Auer S."/>
            <person name="Gabel C."/>
            <person name="Fuchs M."/>
            <person name="Benes V."/>
            <person name="Wurmbach E."/>
            <person name="Drzonek H."/>
            <person name="Erfle H."/>
            <person name="Jordan N."/>
            <person name="Bangert S."/>
            <person name="Wiedelmann R."/>
            <person name="Kranz H."/>
            <person name="Voss H."/>
            <person name="Holland R."/>
            <person name="Brandt P."/>
            <person name="Nyakatura G."/>
            <person name="Vezzi A."/>
            <person name="D'Angelo M."/>
            <person name="Pallavicini A."/>
            <person name="Toppo S."/>
            <person name="Simionati B."/>
            <person name="Conrad A."/>
            <person name="Hornischer K."/>
            <person name="Kauer G."/>
            <person name="Loehnert T.-H."/>
            <person name="Nordsiek G."/>
            <person name="Reichelt J."/>
            <person name="Scharfe M."/>
            <person name="Schoen O."/>
            <person name="Bargues M."/>
            <person name="Terol J."/>
            <person name="Climent J."/>
            <person name="Navarro P."/>
            <person name="Collado C."/>
            <person name="Perez-Perez A."/>
            <person name="Ottenwaelder B."/>
            <person name="Duchemin D."/>
            <person name="Cooke R."/>
            <person name="Laudie M."/>
            <person name="Berger-Llauro C."/>
            <person name="Purnelle B."/>
            <person name="Masuy D."/>
            <person name="de Haan M."/>
            <person name="Maarse A.C."/>
            <person name="Alcaraz J.-P."/>
            <person name="Cottet A."/>
            <person name="Casacuberta E."/>
            <person name="Monfort A."/>
            <person name="Argiriou A."/>
            <person name="Flores M."/>
            <person name="Liguori R."/>
            <person name="Vitale D."/>
            <person name="Mannhaupt G."/>
            <person name="Haase D."/>
            <person name="Schoof H."/>
            <person name="Rudd S."/>
            <person name="Zaccaria P."/>
            <person name="Mewes H.-W."/>
            <person name="Mayer K.F.X."/>
            <person name="Kaul S."/>
            <person name="Town C.D."/>
            <person name="Koo H.L."/>
            <person name="Tallon L.J."/>
            <person name="Jenkins J."/>
            <person name="Rooney T."/>
            <person name="Rizzo M."/>
            <person name="Walts A."/>
            <person name="Utterback T."/>
            <person name="Fujii C.Y."/>
            <person name="Shea T.P."/>
            <person name="Creasy T.H."/>
            <person name="Haas B."/>
            <person name="Maiti R."/>
            <person name="Wu D."/>
            <person name="Peterson J."/>
            <person name="Van Aken S."/>
            <person name="Pai G."/>
            <person name="Militscher J."/>
            <person name="Sellers P."/>
            <person name="Gill J.E."/>
            <person name="Feldblyum T.V."/>
            <person name="Preuss D."/>
            <person name="Lin X."/>
            <person name="Nierman W.C."/>
            <person name="Salzberg S.L."/>
            <person name="White O."/>
            <person name="Venter J.C."/>
            <person name="Fraser C.M."/>
            <person name="Kaneko T."/>
            <person name="Nakamura Y."/>
            <person name="Sato S."/>
            <person name="Kato T."/>
            <person name="Asamizu E."/>
            <person name="Sasamoto S."/>
            <person name="Kimura T."/>
            <person name="Idesawa K."/>
            <person name="Kawashima K."/>
            <person name="Kishida Y."/>
            <person name="Kiyokawa C."/>
            <person name="Kohara M."/>
            <person name="Matsumoto M."/>
            <person name="Matsuno A."/>
            <person name="Muraki A."/>
            <person name="Nakayama S."/>
            <person name="Nakazaki N."/>
            <person name="Shinpo S."/>
            <person name="Takeuchi C."/>
            <person name="Wada T."/>
            <person name="Watanabe A."/>
            <person name="Yamada M."/>
            <person name="Yasuda M."/>
            <person name="Tabata S."/>
        </authorList>
    </citation>
    <scope>NUCLEOTIDE SEQUENCE [LARGE SCALE GENOMIC DNA]</scope>
    <source>
        <strain>cv. Columbia</strain>
    </source>
</reference>
<reference key="2">
    <citation type="journal article" date="2017" name="Plant J.">
        <title>Araport11: a complete reannotation of the Arabidopsis thaliana reference genome.</title>
        <authorList>
            <person name="Cheng C.Y."/>
            <person name="Krishnakumar V."/>
            <person name="Chan A.P."/>
            <person name="Thibaud-Nissen F."/>
            <person name="Schobel S."/>
            <person name="Town C.D."/>
        </authorList>
    </citation>
    <scope>GENOME REANNOTATION</scope>
    <source>
        <strain>cv. Columbia</strain>
    </source>
</reference>
<reference key="3">
    <citation type="journal article" date="2003" name="Science">
        <title>Empirical analysis of transcriptional activity in the Arabidopsis genome.</title>
        <authorList>
            <person name="Yamada K."/>
            <person name="Lim J."/>
            <person name="Dale J.M."/>
            <person name="Chen H."/>
            <person name="Shinn P."/>
            <person name="Palm C.J."/>
            <person name="Southwick A.M."/>
            <person name="Wu H.C."/>
            <person name="Kim C.J."/>
            <person name="Nguyen M."/>
            <person name="Pham P.K."/>
            <person name="Cheuk R.F."/>
            <person name="Karlin-Newmann G."/>
            <person name="Liu S.X."/>
            <person name="Lam B."/>
            <person name="Sakano H."/>
            <person name="Wu T."/>
            <person name="Yu G."/>
            <person name="Miranda M."/>
            <person name="Quach H.L."/>
            <person name="Tripp M."/>
            <person name="Chang C.H."/>
            <person name="Lee J.M."/>
            <person name="Toriumi M.J."/>
            <person name="Chan M.M."/>
            <person name="Tang C.C."/>
            <person name="Onodera C.S."/>
            <person name="Deng J.M."/>
            <person name="Akiyama K."/>
            <person name="Ansari Y."/>
            <person name="Arakawa T."/>
            <person name="Banh J."/>
            <person name="Banno F."/>
            <person name="Bowser L."/>
            <person name="Brooks S.Y."/>
            <person name="Carninci P."/>
            <person name="Chao Q."/>
            <person name="Choy N."/>
            <person name="Enju A."/>
            <person name="Goldsmith A.D."/>
            <person name="Gurjal M."/>
            <person name="Hansen N.F."/>
            <person name="Hayashizaki Y."/>
            <person name="Johnson-Hopson C."/>
            <person name="Hsuan V.W."/>
            <person name="Iida K."/>
            <person name="Karnes M."/>
            <person name="Khan S."/>
            <person name="Koesema E."/>
            <person name="Ishida J."/>
            <person name="Jiang P.X."/>
            <person name="Jones T."/>
            <person name="Kawai J."/>
            <person name="Kamiya A."/>
            <person name="Meyers C."/>
            <person name="Nakajima M."/>
            <person name="Narusaka M."/>
            <person name="Seki M."/>
            <person name="Sakurai T."/>
            <person name="Satou M."/>
            <person name="Tamse R."/>
            <person name="Vaysberg M."/>
            <person name="Wallender E.K."/>
            <person name="Wong C."/>
            <person name="Yamamura Y."/>
            <person name="Yuan S."/>
            <person name="Shinozaki K."/>
            <person name="Davis R.W."/>
            <person name="Theologis A."/>
            <person name="Ecker J.R."/>
        </authorList>
    </citation>
    <scope>NUCLEOTIDE SEQUENCE [LARGE SCALE MRNA]</scope>
    <source>
        <strain>cv. Columbia</strain>
    </source>
</reference>
<reference key="4">
    <citation type="journal article" date="2004" name="Plant Cell">
        <title>Genome-wide analysis of Arabidopsis pentatricopeptide repeat proteins reveals their essential role in organelle biogenesis.</title>
        <authorList>
            <person name="Lurin C."/>
            <person name="Andres C."/>
            <person name="Aubourg S."/>
            <person name="Bellaoui M."/>
            <person name="Bitton F."/>
            <person name="Bruyere C."/>
            <person name="Caboche M."/>
            <person name="Debast C."/>
            <person name="Gualberto J."/>
            <person name="Hoffmann B."/>
            <person name="Lecharny A."/>
            <person name="Le Ret M."/>
            <person name="Martin-Magniette M.-L."/>
            <person name="Mireau H."/>
            <person name="Peeters N."/>
            <person name="Renou J.-P."/>
            <person name="Szurek B."/>
            <person name="Taconnat L."/>
            <person name="Small I."/>
        </authorList>
    </citation>
    <scope>GENE FAMILY</scope>
</reference>
<name>PP216_ARATH</name>
<comment type="interaction">
    <interactant intactId="EBI-4427894">
        <id>Q9SQU6</id>
    </interactant>
    <interactant intactId="EBI-25506855">
        <id>O23160</id>
        <label>MYB73</label>
    </interactant>
    <organismsDiffer>false</organismsDiffer>
    <experiments>3</experiments>
</comment>
<comment type="interaction">
    <interactant intactId="EBI-4427894">
        <id>Q9SQU6</id>
    </interactant>
    <interactant intactId="EBI-4426557">
        <id>Q84MB2</id>
        <label>TIFY8</label>
    </interactant>
    <organismsDiffer>false</organismsDiffer>
    <experiments>4</experiments>
</comment>
<comment type="subcellular location">
    <subcellularLocation>
        <location evidence="2">Plastid</location>
        <location evidence="2">Chloroplast</location>
    </subcellularLocation>
</comment>
<comment type="similarity">
    <text evidence="2">Belongs to the PPR family. P subfamily.</text>
</comment>
<comment type="online information" name="Pentatricopeptide repeat proteins">
    <link uri="https://ppr.plantenergy.uwa.edu.au"/>
</comment>
<evidence type="ECO:0000255" key="1"/>
<evidence type="ECO:0000305" key="2"/>
<keyword id="KW-0150">Chloroplast</keyword>
<keyword id="KW-0934">Plastid</keyword>
<keyword id="KW-1185">Reference proteome</keyword>
<keyword id="KW-0677">Repeat</keyword>
<keyword id="KW-0809">Transit peptide</keyword>
<sequence>MASMSLSFSSSLCSSRIPEGKRRFRHRDVGIVRCVLAASKSSPGSVTKKRLWKDGEFPGITEPVNQRRTPIKNVKKKLDRRSKANGWVNTVTETLSDLIAKKQWLQALEVFDMLREQTFYQPKEGTYMKLLVLLGKSGQPNRAQKLFDEMLEEGLEPTVELYTALLAAYTRSNLIDDAFSILDKMKSFPQCQPDVFTYSTLLKACVDASQFDLVDSLYKEMDERLITPNTVTQNIVLSGYGRVGRFDQMEKVLSDMLVSTACKPDVWTMNIILSVFGNMGKIDMMESWYEKFRNFGIEPETRTFNILIGSYGKKRMYDKMSSVMEYMRKLEFPWTTSTYNNIIEAFADVGDAKNMELTFDQMRSEGMKADTKTFCCLINGYANAGLFHKVISSVQLAAKFEIPENTAFYNAVISACAKADDLIEMERVYIRMKERQCVCDSRTFEIMVEAYEKEGMNDKIYYLEQERQKLMDRTVATKEMENLPAG</sequence>
<accession>Q9SQU6</accession>
<feature type="transit peptide" description="Chloroplast" evidence="1">
    <location>
        <begin position="1"/>
        <end position="36"/>
    </location>
</feature>
<feature type="chain" id="PRO_0000356075" description="Pentatricopeptide repeat-containing protein At3g06430, chloroplastic">
    <location>
        <begin position="37"/>
        <end position="486"/>
    </location>
</feature>
<feature type="repeat" description="PPR 1">
    <location>
        <begin position="123"/>
        <end position="157"/>
    </location>
</feature>
<feature type="repeat" description="PPR 2">
    <location>
        <begin position="158"/>
        <end position="188"/>
    </location>
</feature>
<feature type="repeat" description="PPR 3">
    <location>
        <begin position="194"/>
        <end position="228"/>
    </location>
</feature>
<feature type="repeat" description="PPR 4">
    <location>
        <begin position="229"/>
        <end position="264"/>
    </location>
</feature>
<feature type="repeat" description="PPR 5">
    <location>
        <begin position="265"/>
        <end position="299"/>
    </location>
</feature>
<feature type="repeat" description="PPR 6">
    <location>
        <begin position="300"/>
        <end position="334"/>
    </location>
</feature>
<feature type="repeat" description="PPR 7">
    <location>
        <begin position="335"/>
        <end position="369"/>
    </location>
</feature>
<feature type="repeat" description="PPR 8">
    <location>
        <begin position="370"/>
        <end position="404"/>
    </location>
</feature>
<feature type="repeat" description="PPR 9">
    <location>
        <begin position="405"/>
        <end position="439"/>
    </location>
</feature>
<feature type="repeat" description="PPR 10">
    <location>
        <begin position="440"/>
        <end position="470"/>
    </location>
</feature>
<organism>
    <name type="scientific">Arabidopsis thaliana</name>
    <name type="common">Mouse-ear cress</name>
    <dbReference type="NCBI Taxonomy" id="3702"/>
    <lineage>
        <taxon>Eukaryota</taxon>
        <taxon>Viridiplantae</taxon>
        <taxon>Streptophyta</taxon>
        <taxon>Embryophyta</taxon>
        <taxon>Tracheophyta</taxon>
        <taxon>Spermatophyta</taxon>
        <taxon>Magnoliopsida</taxon>
        <taxon>eudicotyledons</taxon>
        <taxon>Gunneridae</taxon>
        <taxon>Pentapetalae</taxon>
        <taxon>rosids</taxon>
        <taxon>malvids</taxon>
        <taxon>Brassicales</taxon>
        <taxon>Brassicaceae</taxon>
        <taxon>Camelineae</taxon>
        <taxon>Arabidopsis</taxon>
    </lineage>
</organism>
<gene>
    <name type="primary">EMB2750</name>
    <name type="ordered locus">At3g06430</name>
    <name type="ORF">F24P17.10</name>
</gene>